<organism>
    <name type="scientific">Archaeoglobus fulgidus (strain ATCC 49558 / DSM 4304 / JCM 9628 / NBRC 100126 / VC-16)</name>
    <dbReference type="NCBI Taxonomy" id="224325"/>
    <lineage>
        <taxon>Archaea</taxon>
        <taxon>Methanobacteriati</taxon>
        <taxon>Methanobacteriota</taxon>
        <taxon>Archaeoglobi</taxon>
        <taxon>Archaeoglobales</taxon>
        <taxon>Archaeoglobaceae</taxon>
        <taxon>Archaeoglobus</taxon>
    </lineage>
</organism>
<name>MRE11_ARCFU</name>
<gene>
    <name evidence="1" type="primary">mre11</name>
    <name type="ordered locus">AF_1031</name>
</gene>
<accession>O29231</accession>
<dbReference type="EC" id="3.1.-.-" evidence="1"/>
<dbReference type="EMBL" id="AE000782">
    <property type="protein sequence ID" value="AAB90212.1"/>
    <property type="molecule type" value="Genomic_DNA"/>
</dbReference>
<dbReference type="PIR" id="G69378">
    <property type="entry name" value="G69378"/>
</dbReference>
<dbReference type="RefSeq" id="WP_010878531.1">
    <property type="nucleotide sequence ID" value="NC_000917.1"/>
</dbReference>
<dbReference type="SMR" id="O29231"/>
<dbReference type="STRING" id="224325.AF_1031"/>
<dbReference type="PaxDb" id="224325-AF_1031"/>
<dbReference type="EnsemblBacteria" id="AAB90212">
    <property type="protein sequence ID" value="AAB90212"/>
    <property type="gene ID" value="AF_1031"/>
</dbReference>
<dbReference type="GeneID" id="1484254"/>
<dbReference type="KEGG" id="afu:AF_1031"/>
<dbReference type="eggNOG" id="arCOG00397">
    <property type="taxonomic scope" value="Archaea"/>
</dbReference>
<dbReference type="HOGENOM" id="CLU_026621_5_1_2"/>
<dbReference type="OrthoDB" id="11638at2157"/>
<dbReference type="PhylomeDB" id="O29231"/>
<dbReference type="Proteomes" id="UP000002199">
    <property type="component" value="Chromosome"/>
</dbReference>
<dbReference type="GO" id="GO:0008408">
    <property type="term" value="F:3'-5' exonuclease activity"/>
    <property type="evidence" value="ECO:0007669"/>
    <property type="project" value="UniProtKB-UniRule"/>
</dbReference>
<dbReference type="GO" id="GO:0045027">
    <property type="term" value="F:DNA end binding"/>
    <property type="evidence" value="ECO:0007669"/>
    <property type="project" value="UniProtKB-UniRule"/>
</dbReference>
<dbReference type="GO" id="GO:0004519">
    <property type="term" value="F:endonuclease activity"/>
    <property type="evidence" value="ECO:0007669"/>
    <property type="project" value="UniProtKB-UniRule"/>
</dbReference>
<dbReference type="GO" id="GO:0030145">
    <property type="term" value="F:manganese ion binding"/>
    <property type="evidence" value="ECO:0007669"/>
    <property type="project" value="UniProtKB-UniRule"/>
</dbReference>
<dbReference type="GO" id="GO:0000403">
    <property type="term" value="F:Y-form DNA binding"/>
    <property type="evidence" value="ECO:0007669"/>
    <property type="project" value="UniProtKB-UniRule"/>
</dbReference>
<dbReference type="GO" id="GO:0006302">
    <property type="term" value="P:double-strand break repair"/>
    <property type="evidence" value="ECO:0007669"/>
    <property type="project" value="UniProtKB-UniRule"/>
</dbReference>
<dbReference type="CDD" id="cd00840">
    <property type="entry name" value="MPP_Mre11_N"/>
    <property type="match status" value="1"/>
</dbReference>
<dbReference type="Gene3D" id="3.60.21.10">
    <property type="match status" value="1"/>
</dbReference>
<dbReference type="HAMAP" id="MF_02044">
    <property type="entry name" value="Mre11"/>
    <property type="match status" value="1"/>
</dbReference>
<dbReference type="InterPro" id="IPR004843">
    <property type="entry name" value="Calcineurin-like_PHP_ApaH"/>
</dbReference>
<dbReference type="InterPro" id="IPR050535">
    <property type="entry name" value="DNA_Repair-Maintenance_Comp"/>
</dbReference>
<dbReference type="InterPro" id="IPR029052">
    <property type="entry name" value="Metallo-depent_PP-like"/>
</dbReference>
<dbReference type="InterPro" id="IPR032885">
    <property type="entry name" value="Mre11_archaea-type"/>
</dbReference>
<dbReference type="InterPro" id="IPR041796">
    <property type="entry name" value="Mre11_N"/>
</dbReference>
<dbReference type="PANTHER" id="PTHR30337">
    <property type="entry name" value="COMPONENT OF ATP-DEPENDENT DSDNA EXONUCLEASE"/>
    <property type="match status" value="1"/>
</dbReference>
<dbReference type="PANTHER" id="PTHR30337:SF0">
    <property type="entry name" value="NUCLEASE SBCCD SUBUNIT D"/>
    <property type="match status" value="1"/>
</dbReference>
<dbReference type="Pfam" id="PF00149">
    <property type="entry name" value="Metallophos"/>
    <property type="match status" value="1"/>
</dbReference>
<dbReference type="SUPFAM" id="SSF56300">
    <property type="entry name" value="Metallo-dependent phosphatases"/>
    <property type="match status" value="1"/>
</dbReference>
<evidence type="ECO:0000255" key="1">
    <source>
        <dbReference type="HAMAP-Rule" id="MF_02044"/>
    </source>
</evidence>
<evidence type="ECO:0000256" key="2">
    <source>
        <dbReference type="SAM" id="MobiDB-lite"/>
    </source>
</evidence>
<sequence length="443" mass="51178">MKFAHIADVHLGYEQYNQPWRAEDFAKAFKVIAEKAVESNADFVVIAGDLFHRSLPSPRTIKEAVETLWMFRKENIPVFAVEGNHDKTSRDISAYHLLESLGLLNVLGLRRNPVRGENVESLRIQNVYLVKGVVDDVEILGDRHRSKWQLEKVLPLLKPQSDKSVLVLHQAVKEVVDIDLDMAYELTINDLPEASYYAFGHIHLPKIYEFDGKAIAYPGSVERYDLREASKIVRYRDELVLKDGIRKGFILVKNFRPEFVEIETRELYDVEIEDESVEGLEKKFLEVLGRADKEGIMVAKLKSSDAVDVRRLSEVAAKRVRYAEIRFERILEEIEEVEIKQESEFFTEFELKLLELLRGEMDEDEVYSLVVEHYLSGGALKQEEGAEERVVEEETEKKVEEQFKGDEEADEAERRAEETEKAKSTKKARKPKTLLDFLGVEEE</sequence>
<keyword id="KW-0227">DNA damage</keyword>
<keyword id="KW-0234">DNA repair</keyword>
<keyword id="KW-0255">Endonuclease</keyword>
<keyword id="KW-0269">Exonuclease</keyword>
<keyword id="KW-0378">Hydrolase</keyword>
<keyword id="KW-0464">Manganese</keyword>
<keyword id="KW-0479">Metal-binding</keyword>
<keyword id="KW-0540">Nuclease</keyword>
<keyword id="KW-1185">Reference proteome</keyword>
<reference key="1">
    <citation type="journal article" date="1997" name="Nature">
        <title>The complete genome sequence of the hyperthermophilic, sulphate-reducing archaeon Archaeoglobus fulgidus.</title>
        <authorList>
            <person name="Klenk H.-P."/>
            <person name="Clayton R.A."/>
            <person name="Tomb J.-F."/>
            <person name="White O."/>
            <person name="Nelson K.E."/>
            <person name="Ketchum K.A."/>
            <person name="Dodson R.J."/>
            <person name="Gwinn M.L."/>
            <person name="Hickey E.K."/>
            <person name="Peterson J.D."/>
            <person name="Richardson D.L."/>
            <person name="Kerlavage A.R."/>
            <person name="Graham D.E."/>
            <person name="Kyrpides N.C."/>
            <person name="Fleischmann R.D."/>
            <person name="Quackenbush J."/>
            <person name="Lee N.H."/>
            <person name="Sutton G.G."/>
            <person name="Gill S.R."/>
            <person name="Kirkness E.F."/>
            <person name="Dougherty B.A."/>
            <person name="McKenney K."/>
            <person name="Adams M.D."/>
            <person name="Loftus B.J."/>
            <person name="Peterson S.N."/>
            <person name="Reich C.I."/>
            <person name="McNeil L.K."/>
            <person name="Badger J.H."/>
            <person name="Glodek A."/>
            <person name="Zhou L."/>
            <person name="Overbeek R."/>
            <person name="Gocayne J.D."/>
            <person name="Weidman J.F."/>
            <person name="McDonald L.A."/>
            <person name="Utterback T.R."/>
            <person name="Cotton M.D."/>
            <person name="Spriggs T."/>
            <person name="Artiach P."/>
            <person name="Kaine B.P."/>
            <person name="Sykes S.M."/>
            <person name="Sadow P.W."/>
            <person name="D'Andrea K.P."/>
            <person name="Bowman C."/>
            <person name="Fujii C."/>
            <person name="Garland S.A."/>
            <person name="Mason T.M."/>
            <person name="Olsen G.J."/>
            <person name="Fraser C.M."/>
            <person name="Smith H.O."/>
            <person name="Woese C.R."/>
            <person name="Venter J.C."/>
        </authorList>
    </citation>
    <scope>NUCLEOTIDE SEQUENCE [LARGE SCALE GENOMIC DNA]</scope>
    <source>
        <strain>ATCC 49558 / DSM 4304 / JCM 9628 / NBRC 100126 / VC-16</strain>
    </source>
</reference>
<protein>
    <recommendedName>
        <fullName evidence="1">DNA double-strand break repair protein Mre11</fullName>
        <ecNumber evidence="1">3.1.-.-</ecNumber>
    </recommendedName>
</protein>
<proteinExistence type="inferred from homology"/>
<comment type="function">
    <text evidence="1">Part of the Rad50/Mre11 complex, which is involved in the early steps of DNA double-strand break (DSB) repair. The complex may facilitate opening of the processed DNA ends to aid in the recruitment of HerA and NurA. Mre11 binds to DSB ends and has both double-stranded 3'-5' exonuclease activity and single-stranded endonuclease activity.</text>
</comment>
<comment type="cofactor">
    <cofactor evidence="1">
        <name>Mn(2+)</name>
        <dbReference type="ChEBI" id="CHEBI:29035"/>
    </cofactor>
    <text evidence="1">Binds 2 manganese ions per subunit.</text>
</comment>
<comment type="activity regulation">
    <text evidence="1">Nuclease activity is regulated by Rad50.</text>
</comment>
<comment type="subunit">
    <text evidence="1">Homodimer. Forms a heterotetramer composed of two Mre11 subunits and two Rad50 subunits.</text>
</comment>
<comment type="similarity">
    <text evidence="1">Belongs to the MRE11/RAD32 family.</text>
</comment>
<feature type="chain" id="PRO_0000138685" description="DNA double-strand break repair protein Mre11">
    <location>
        <begin position="1"/>
        <end position="443"/>
    </location>
</feature>
<feature type="region of interest" description="Disordered" evidence="2">
    <location>
        <begin position="382"/>
        <end position="429"/>
    </location>
</feature>
<feature type="compositionally biased region" description="Basic and acidic residues" evidence="2">
    <location>
        <begin position="395"/>
        <end position="423"/>
    </location>
</feature>
<feature type="active site" description="Proton donor" evidence="1">
    <location>
        <position position="85"/>
    </location>
</feature>
<feature type="binding site" evidence="1">
    <location>
        <position position="8"/>
    </location>
    <ligand>
        <name>Mn(2+)</name>
        <dbReference type="ChEBI" id="CHEBI:29035"/>
        <label>1</label>
    </ligand>
</feature>
<feature type="binding site" evidence="1">
    <location>
        <position position="10"/>
    </location>
    <ligand>
        <name>Mn(2+)</name>
        <dbReference type="ChEBI" id="CHEBI:29035"/>
        <label>1</label>
    </ligand>
</feature>
<feature type="binding site" evidence="1">
    <location>
        <position position="49"/>
    </location>
    <ligand>
        <name>Mn(2+)</name>
        <dbReference type="ChEBI" id="CHEBI:29035"/>
        <label>1</label>
    </ligand>
</feature>
<feature type="binding site" evidence="1">
    <location>
        <position position="49"/>
    </location>
    <ligand>
        <name>Mn(2+)</name>
        <dbReference type="ChEBI" id="CHEBI:29035"/>
        <label>2</label>
    </ligand>
</feature>
<feature type="binding site" evidence="1">
    <location>
        <position position="84"/>
    </location>
    <ligand>
        <name>Mn(2+)</name>
        <dbReference type="ChEBI" id="CHEBI:29035"/>
        <label>2</label>
    </ligand>
</feature>
<feature type="binding site" evidence="1">
    <location>
        <position position="169"/>
    </location>
    <ligand>
        <name>Mn(2+)</name>
        <dbReference type="ChEBI" id="CHEBI:29035"/>
        <label>2</label>
    </ligand>
</feature>
<feature type="binding site" evidence="1">
    <location>
        <position position="201"/>
    </location>
    <ligand>
        <name>Mn(2+)</name>
        <dbReference type="ChEBI" id="CHEBI:29035"/>
        <label>2</label>
    </ligand>
</feature>
<feature type="binding site" evidence="1">
    <location>
        <position position="203"/>
    </location>
    <ligand>
        <name>Mn(2+)</name>
        <dbReference type="ChEBI" id="CHEBI:29035"/>
        <label>1</label>
    </ligand>
</feature>